<protein>
    <recommendedName>
        <fullName evidence="1">Phosphoserine aminotransferase</fullName>
        <ecNumber evidence="1">2.6.1.52</ecNumber>
    </recommendedName>
    <alternativeName>
        <fullName evidence="1">Phosphohydroxythreonine aminotransferase</fullName>
        <shortName evidence="1">PSAT</shortName>
    </alternativeName>
</protein>
<keyword id="KW-0028">Amino-acid biosynthesis</keyword>
<keyword id="KW-0032">Aminotransferase</keyword>
<keyword id="KW-0963">Cytoplasm</keyword>
<keyword id="KW-0663">Pyridoxal phosphate</keyword>
<keyword id="KW-0664">Pyridoxine biosynthesis</keyword>
<keyword id="KW-0718">Serine biosynthesis</keyword>
<keyword id="KW-0808">Transferase</keyword>
<comment type="function">
    <text evidence="1">Catalyzes the reversible conversion of 3-phosphohydroxypyruvate to phosphoserine and of 3-hydroxy-2-oxo-4-phosphonooxybutanoate to phosphohydroxythreonine.</text>
</comment>
<comment type="catalytic activity">
    <reaction evidence="1">
        <text>O-phospho-L-serine + 2-oxoglutarate = 3-phosphooxypyruvate + L-glutamate</text>
        <dbReference type="Rhea" id="RHEA:14329"/>
        <dbReference type="ChEBI" id="CHEBI:16810"/>
        <dbReference type="ChEBI" id="CHEBI:18110"/>
        <dbReference type="ChEBI" id="CHEBI:29985"/>
        <dbReference type="ChEBI" id="CHEBI:57524"/>
        <dbReference type="EC" id="2.6.1.52"/>
    </reaction>
</comment>
<comment type="catalytic activity">
    <reaction evidence="1">
        <text>4-(phosphooxy)-L-threonine + 2-oxoglutarate = (R)-3-hydroxy-2-oxo-4-phosphooxybutanoate + L-glutamate</text>
        <dbReference type="Rhea" id="RHEA:16573"/>
        <dbReference type="ChEBI" id="CHEBI:16810"/>
        <dbReference type="ChEBI" id="CHEBI:29985"/>
        <dbReference type="ChEBI" id="CHEBI:58452"/>
        <dbReference type="ChEBI" id="CHEBI:58538"/>
        <dbReference type="EC" id="2.6.1.52"/>
    </reaction>
</comment>
<comment type="cofactor">
    <cofactor evidence="1">
        <name>pyridoxal 5'-phosphate</name>
        <dbReference type="ChEBI" id="CHEBI:597326"/>
    </cofactor>
    <text evidence="1">Binds 1 pyridoxal phosphate per subunit.</text>
</comment>
<comment type="pathway">
    <text evidence="1">Amino-acid biosynthesis; L-serine biosynthesis; L-serine from 3-phospho-D-glycerate: step 2/3.</text>
</comment>
<comment type="pathway">
    <text evidence="1">Cofactor biosynthesis; pyridoxine 5'-phosphate biosynthesis; pyridoxine 5'-phosphate from D-erythrose 4-phosphate: step 3/5.</text>
</comment>
<comment type="subunit">
    <text evidence="1">Homodimer.</text>
</comment>
<comment type="subcellular location">
    <subcellularLocation>
        <location evidence="1">Cytoplasm</location>
    </subcellularLocation>
</comment>
<comment type="similarity">
    <text evidence="1">Belongs to the class-V pyridoxal-phosphate-dependent aminotransferase family. SerC subfamily.</text>
</comment>
<reference key="1">
    <citation type="journal article" date="1997" name="Curr. Microbiol.">
        <title>Nucleotide sequence of a DNA fragment from Buchnera aphidicola (Aphid endosymbiont) containing the genes aspS-trxB-serS-serC-aroA-rpsA-himD-tpiA.</title>
        <authorList>
            <person name="Thao M.L."/>
            <person name="Baumann P."/>
        </authorList>
    </citation>
    <scope>NUCLEOTIDE SEQUENCE [GENOMIC DNA]</scope>
</reference>
<reference key="2">
    <citation type="journal article" date="2002" name="Science">
        <title>50 million years of genomic stasis in endosymbiotic bacteria.</title>
        <authorList>
            <person name="Tamas I."/>
            <person name="Klasson L."/>
            <person name="Canbaeck B."/>
            <person name="Naeslund A.K."/>
            <person name="Eriksson A.-S."/>
            <person name="Wernegreen J.J."/>
            <person name="Sandstroem J.P."/>
            <person name="Moran N.A."/>
            <person name="Andersson S.G.E."/>
        </authorList>
    </citation>
    <scope>NUCLEOTIDE SEQUENCE [LARGE SCALE GENOMIC DNA]</scope>
    <source>
        <strain>Sg</strain>
    </source>
</reference>
<proteinExistence type="inferred from homology"/>
<evidence type="ECO:0000255" key="1">
    <source>
        <dbReference type="HAMAP-Rule" id="MF_00160"/>
    </source>
</evidence>
<name>SERC_BUCAP</name>
<feature type="chain" id="PRO_0000150159" description="Phosphoserine aminotransferase">
    <location>
        <begin position="1"/>
        <end position="361"/>
    </location>
</feature>
<feature type="binding site" evidence="1">
    <location>
        <position position="42"/>
    </location>
    <ligand>
        <name>L-glutamate</name>
        <dbReference type="ChEBI" id="CHEBI:29985"/>
    </ligand>
</feature>
<feature type="binding site" evidence="1">
    <location>
        <begin position="76"/>
        <end position="77"/>
    </location>
    <ligand>
        <name>pyridoxal 5'-phosphate</name>
        <dbReference type="ChEBI" id="CHEBI:597326"/>
    </ligand>
</feature>
<feature type="binding site" evidence="1">
    <location>
        <position position="102"/>
    </location>
    <ligand>
        <name>pyridoxal 5'-phosphate</name>
        <dbReference type="ChEBI" id="CHEBI:597326"/>
    </ligand>
</feature>
<feature type="binding site" evidence="1">
    <location>
        <position position="153"/>
    </location>
    <ligand>
        <name>pyridoxal 5'-phosphate</name>
        <dbReference type="ChEBI" id="CHEBI:597326"/>
    </ligand>
</feature>
<feature type="binding site" evidence="1">
    <location>
        <position position="173"/>
    </location>
    <ligand>
        <name>pyridoxal 5'-phosphate</name>
        <dbReference type="ChEBI" id="CHEBI:597326"/>
    </ligand>
</feature>
<feature type="binding site" evidence="1">
    <location>
        <position position="196"/>
    </location>
    <ligand>
        <name>pyridoxal 5'-phosphate</name>
        <dbReference type="ChEBI" id="CHEBI:597326"/>
    </ligand>
</feature>
<feature type="binding site" evidence="1">
    <location>
        <begin position="238"/>
        <end position="239"/>
    </location>
    <ligand>
        <name>pyridoxal 5'-phosphate</name>
        <dbReference type="ChEBI" id="CHEBI:597326"/>
    </ligand>
</feature>
<feature type="modified residue" description="N6-(pyridoxal phosphate)lysine" evidence="1">
    <location>
        <position position="197"/>
    </location>
</feature>
<sequence>MNLIYNFSAGPAMIPKDVLYQAKKELQNWNQIGCSIMEISHRSKEFIQVALEAEQDLRDLLNISNSYEILFCQGGARGQFAAVPMNLLGNFKETDYINSGYWSNCALIEAKKYCIPKNISVRQKKNGKSFLLKPSQWNISDNSAYIHYCPNETIDGMSIYEEPNFKNKIIVGDFSSFILSRRINIENYGLIYAGAQKNIGPSGITIILIRKDLIGYASKISPSIFNYYIISKYNSMFNTPPTFSWYLSGLVFKWLKKQGGIKKIEQLNQKKSNLLYQIIDNSNFYINDIDKRNRSQMNVVFHLYNSKLDNLFLKEAKNAGLNALKGHNVIGGMRASIYNAMPLEGVQSLAKFMLYFEKKYG</sequence>
<organism>
    <name type="scientific">Buchnera aphidicola subsp. Schizaphis graminum (strain Sg)</name>
    <dbReference type="NCBI Taxonomy" id="198804"/>
    <lineage>
        <taxon>Bacteria</taxon>
        <taxon>Pseudomonadati</taxon>
        <taxon>Pseudomonadota</taxon>
        <taxon>Gammaproteobacteria</taxon>
        <taxon>Enterobacterales</taxon>
        <taxon>Erwiniaceae</taxon>
        <taxon>Buchnera</taxon>
    </lineage>
</organism>
<gene>
    <name evidence="1" type="primary">serC</name>
    <name type="ordered locus">BUsg_302</name>
</gene>
<accession>P81435</accession>
<dbReference type="EC" id="2.6.1.52" evidence="1"/>
<dbReference type="EMBL" id="L43549">
    <property type="protein sequence ID" value="AAC05435.1"/>
    <property type="molecule type" value="Genomic_DNA"/>
</dbReference>
<dbReference type="EMBL" id="AE013218">
    <property type="protein sequence ID" value="AAM67856.1"/>
    <property type="molecule type" value="Genomic_DNA"/>
</dbReference>
<dbReference type="RefSeq" id="WP_011053823.1">
    <property type="nucleotide sequence ID" value="NC_004061.1"/>
</dbReference>
<dbReference type="SMR" id="P81435"/>
<dbReference type="STRING" id="198804.BUsg_302"/>
<dbReference type="GeneID" id="93003771"/>
<dbReference type="KEGG" id="bas:BUsg_302"/>
<dbReference type="eggNOG" id="COG1932">
    <property type="taxonomic scope" value="Bacteria"/>
</dbReference>
<dbReference type="HOGENOM" id="CLU_034866_0_2_6"/>
<dbReference type="UniPathway" id="UPA00135">
    <property type="reaction ID" value="UER00197"/>
</dbReference>
<dbReference type="UniPathway" id="UPA00244">
    <property type="reaction ID" value="UER00311"/>
</dbReference>
<dbReference type="Proteomes" id="UP000000416">
    <property type="component" value="Chromosome"/>
</dbReference>
<dbReference type="GO" id="GO:0005737">
    <property type="term" value="C:cytoplasm"/>
    <property type="evidence" value="ECO:0007669"/>
    <property type="project" value="UniProtKB-SubCell"/>
</dbReference>
<dbReference type="GO" id="GO:0004648">
    <property type="term" value="F:O-phospho-L-serine:2-oxoglutarate aminotransferase activity"/>
    <property type="evidence" value="ECO:0007669"/>
    <property type="project" value="UniProtKB-UniRule"/>
</dbReference>
<dbReference type="GO" id="GO:0030170">
    <property type="term" value="F:pyridoxal phosphate binding"/>
    <property type="evidence" value="ECO:0007669"/>
    <property type="project" value="UniProtKB-UniRule"/>
</dbReference>
<dbReference type="GO" id="GO:0006564">
    <property type="term" value="P:L-serine biosynthetic process"/>
    <property type="evidence" value="ECO:0007669"/>
    <property type="project" value="UniProtKB-UniRule"/>
</dbReference>
<dbReference type="GO" id="GO:0008615">
    <property type="term" value="P:pyridoxine biosynthetic process"/>
    <property type="evidence" value="ECO:0007669"/>
    <property type="project" value="UniProtKB-UniRule"/>
</dbReference>
<dbReference type="FunFam" id="3.40.640.10:FF:000010">
    <property type="entry name" value="Phosphoserine aminotransferase"/>
    <property type="match status" value="1"/>
</dbReference>
<dbReference type="FunFam" id="3.90.1150.10:FF:000006">
    <property type="entry name" value="Phosphoserine aminotransferase"/>
    <property type="match status" value="1"/>
</dbReference>
<dbReference type="Gene3D" id="3.90.1150.10">
    <property type="entry name" value="Aspartate Aminotransferase, domain 1"/>
    <property type="match status" value="1"/>
</dbReference>
<dbReference type="Gene3D" id="3.40.640.10">
    <property type="entry name" value="Type I PLP-dependent aspartate aminotransferase-like (Major domain)"/>
    <property type="match status" value="1"/>
</dbReference>
<dbReference type="HAMAP" id="MF_00160">
    <property type="entry name" value="SerC_aminotrans_5"/>
    <property type="match status" value="1"/>
</dbReference>
<dbReference type="InterPro" id="IPR000192">
    <property type="entry name" value="Aminotrans_V_dom"/>
</dbReference>
<dbReference type="InterPro" id="IPR020578">
    <property type="entry name" value="Aminotrans_V_PyrdxlP_BS"/>
</dbReference>
<dbReference type="InterPro" id="IPR022278">
    <property type="entry name" value="Pser_aminoTfrase"/>
</dbReference>
<dbReference type="InterPro" id="IPR015424">
    <property type="entry name" value="PyrdxlP-dep_Trfase"/>
</dbReference>
<dbReference type="InterPro" id="IPR015421">
    <property type="entry name" value="PyrdxlP-dep_Trfase_major"/>
</dbReference>
<dbReference type="InterPro" id="IPR015422">
    <property type="entry name" value="PyrdxlP-dep_Trfase_small"/>
</dbReference>
<dbReference type="NCBIfam" id="NF003764">
    <property type="entry name" value="PRK05355.1"/>
    <property type="match status" value="1"/>
</dbReference>
<dbReference type="NCBIfam" id="TIGR01364">
    <property type="entry name" value="serC_1"/>
    <property type="match status" value="1"/>
</dbReference>
<dbReference type="PANTHER" id="PTHR43247">
    <property type="entry name" value="PHOSPHOSERINE AMINOTRANSFERASE"/>
    <property type="match status" value="1"/>
</dbReference>
<dbReference type="PANTHER" id="PTHR43247:SF1">
    <property type="entry name" value="PHOSPHOSERINE AMINOTRANSFERASE"/>
    <property type="match status" value="1"/>
</dbReference>
<dbReference type="Pfam" id="PF00266">
    <property type="entry name" value="Aminotran_5"/>
    <property type="match status" value="1"/>
</dbReference>
<dbReference type="PIRSF" id="PIRSF000525">
    <property type="entry name" value="SerC"/>
    <property type="match status" value="1"/>
</dbReference>
<dbReference type="SUPFAM" id="SSF53383">
    <property type="entry name" value="PLP-dependent transferases"/>
    <property type="match status" value="1"/>
</dbReference>
<dbReference type="PROSITE" id="PS00595">
    <property type="entry name" value="AA_TRANSFER_CLASS_5"/>
    <property type="match status" value="1"/>
</dbReference>